<dbReference type="EMBL" id="AE014297">
    <property type="protein sequence ID" value="AAF54165.2"/>
    <property type="molecule type" value="Genomic_DNA"/>
</dbReference>
<dbReference type="EMBL" id="AE014297">
    <property type="protein sequence ID" value="AFH06292.1"/>
    <property type="molecule type" value="Genomic_DNA"/>
</dbReference>
<dbReference type="EMBL" id="AY069549">
    <property type="protein sequence ID" value="AAL39694.1"/>
    <property type="molecule type" value="mRNA"/>
</dbReference>
<dbReference type="EMBL" id="BT122058">
    <property type="protein sequence ID" value="ADD70139.1"/>
    <property type="molecule type" value="mRNA"/>
</dbReference>
<dbReference type="EMBL" id="BT122059">
    <property type="protein sequence ID" value="ADD70140.1"/>
    <property type="molecule type" value="mRNA"/>
</dbReference>
<dbReference type="EMBL" id="AF017096">
    <property type="protein sequence ID" value="AAC39085.1"/>
    <property type="molecule type" value="Genomic_DNA"/>
</dbReference>
<dbReference type="RefSeq" id="NP_001246973.1">
    <molecule id="Q8T053-2"/>
    <property type="nucleotide sequence ID" value="NM_001260044.2"/>
</dbReference>
<dbReference type="RefSeq" id="NP_649750.1">
    <molecule id="Q8T053-1"/>
    <property type="nucleotide sequence ID" value="NM_141493.4"/>
</dbReference>
<dbReference type="SMR" id="Q8T053"/>
<dbReference type="BioGRID" id="66123">
    <property type="interactions" value="27"/>
</dbReference>
<dbReference type="DIP" id="DIP-18092N"/>
<dbReference type="FunCoup" id="Q8T053">
    <property type="interactions" value="53"/>
</dbReference>
<dbReference type="IntAct" id="Q8T053">
    <property type="interactions" value="8"/>
</dbReference>
<dbReference type="STRING" id="7227.FBpp0081254"/>
<dbReference type="iPTMnet" id="Q8T053"/>
<dbReference type="PaxDb" id="7227-FBpp0081254"/>
<dbReference type="DNASU" id="40937"/>
<dbReference type="EnsemblMetazoa" id="FBtr0081757">
    <molecule id="Q8T053-1"/>
    <property type="protein sequence ID" value="FBpp0081254"/>
    <property type="gene ID" value="FBgn0014931"/>
</dbReference>
<dbReference type="EnsemblMetazoa" id="FBtr0304703">
    <molecule id="Q8T053-2"/>
    <property type="protein sequence ID" value="FBpp0293246"/>
    <property type="gene ID" value="FBgn0014931"/>
</dbReference>
<dbReference type="GeneID" id="40937"/>
<dbReference type="KEGG" id="dme:Dmel_CG2678"/>
<dbReference type="UCSC" id="CG2678-RA">
    <molecule id="Q8T053-1"/>
    <property type="organism name" value="d. melanogaster"/>
</dbReference>
<dbReference type="AGR" id="FB:FBgn0014931"/>
<dbReference type="CTD" id="40937"/>
<dbReference type="FlyBase" id="FBgn0014931">
    <property type="gene designation" value="kipf"/>
</dbReference>
<dbReference type="VEuPathDB" id="VectorBase:FBgn0014931"/>
<dbReference type="eggNOG" id="KOG1721">
    <property type="taxonomic scope" value="Eukaryota"/>
</dbReference>
<dbReference type="HOGENOM" id="CLU_002678_94_1_1"/>
<dbReference type="InParanoid" id="Q8T053"/>
<dbReference type="OMA" id="WRSERSY"/>
<dbReference type="OrthoDB" id="654211at2759"/>
<dbReference type="PhylomeDB" id="Q8T053"/>
<dbReference type="Reactome" id="R-DME-212436">
    <property type="pathway name" value="Generic Transcription Pathway"/>
</dbReference>
<dbReference type="Reactome" id="R-DME-6803204">
    <property type="pathway name" value="TP53 Regulates Transcription of Genes Involved in Cytochrome C Release"/>
</dbReference>
<dbReference type="Reactome" id="R-DME-9843940">
    <property type="pathway name" value="Regulation of endogenous retroelements by KRAB-ZFP proteins"/>
</dbReference>
<dbReference type="SignaLink" id="Q8T053"/>
<dbReference type="BioGRID-ORCS" id="40937">
    <property type="hits" value="0 hits in 1 CRISPR screen"/>
</dbReference>
<dbReference type="GenomeRNAi" id="40937"/>
<dbReference type="PRO" id="PR:Q8T053"/>
<dbReference type="Proteomes" id="UP000000803">
    <property type="component" value="Chromosome 3R"/>
</dbReference>
<dbReference type="Bgee" id="FBgn0014931">
    <property type="expression patterns" value="Expressed in cleaving embryo and 28 other cell types or tissues"/>
</dbReference>
<dbReference type="ExpressionAtlas" id="Q8T053">
    <property type="expression patterns" value="baseline and differential"/>
</dbReference>
<dbReference type="GO" id="GO:0005694">
    <property type="term" value="C:chromosome"/>
    <property type="evidence" value="ECO:0007669"/>
    <property type="project" value="UniProtKB-SubCell"/>
</dbReference>
<dbReference type="GO" id="GO:0005829">
    <property type="term" value="C:cytosol"/>
    <property type="evidence" value="ECO:0007005"/>
    <property type="project" value="FlyBase"/>
</dbReference>
<dbReference type="GO" id="GO:0005634">
    <property type="term" value="C:nucleus"/>
    <property type="evidence" value="ECO:0000250"/>
    <property type="project" value="FlyBase"/>
</dbReference>
<dbReference type="GO" id="GO:0031490">
    <property type="term" value="F:chromatin DNA binding"/>
    <property type="evidence" value="ECO:0000314"/>
    <property type="project" value="FlyBase"/>
</dbReference>
<dbReference type="GO" id="GO:0140463">
    <property type="term" value="F:chromatin-protein adaptor activity"/>
    <property type="evidence" value="ECO:0000353"/>
    <property type="project" value="FlyBase"/>
</dbReference>
<dbReference type="GO" id="GO:0003700">
    <property type="term" value="F:DNA-binding transcription factor activity"/>
    <property type="evidence" value="ECO:0000250"/>
    <property type="project" value="FlyBase"/>
</dbReference>
<dbReference type="GO" id="GO:1990837">
    <property type="term" value="F:sequence-specific double-stranded DNA binding"/>
    <property type="evidence" value="ECO:0000315"/>
    <property type="project" value="FlyBase"/>
</dbReference>
<dbReference type="GO" id="GO:0000976">
    <property type="term" value="F:transcription cis-regulatory region binding"/>
    <property type="evidence" value="ECO:0000250"/>
    <property type="project" value="FlyBase"/>
</dbReference>
<dbReference type="GO" id="GO:0008270">
    <property type="term" value="F:zinc ion binding"/>
    <property type="evidence" value="ECO:0000250"/>
    <property type="project" value="FlyBase"/>
</dbReference>
<dbReference type="GO" id="GO:0140543">
    <property type="term" value="P:positive regulation of piRNA transcription"/>
    <property type="evidence" value="ECO:0000315"/>
    <property type="project" value="FlyBase"/>
</dbReference>
<dbReference type="GO" id="GO:0006355">
    <property type="term" value="P:regulation of DNA-templated transcription"/>
    <property type="evidence" value="ECO:0000250"/>
    <property type="project" value="FlyBase"/>
</dbReference>
<dbReference type="Gene3D" id="3.30.160.60">
    <property type="entry name" value="Classic Zinc Finger"/>
    <property type="match status" value="4"/>
</dbReference>
<dbReference type="InterPro" id="IPR050636">
    <property type="entry name" value="C2H2-ZF_domain-containing"/>
</dbReference>
<dbReference type="InterPro" id="IPR012934">
    <property type="entry name" value="Znf_AD"/>
</dbReference>
<dbReference type="InterPro" id="IPR036236">
    <property type="entry name" value="Znf_C2H2_sf"/>
</dbReference>
<dbReference type="InterPro" id="IPR013087">
    <property type="entry name" value="Znf_C2H2_type"/>
</dbReference>
<dbReference type="PANTHER" id="PTHR47772:SF13">
    <property type="entry name" value="GASTRULA ZINC FINGER PROTEIN XLCGF49.1-LIKE-RELATED"/>
    <property type="match status" value="1"/>
</dbReference>
<dbReference type="PANTHER" id="PTHR47772">
    <property type="entry name" value="ZINC FINGER PROTEIN 200"/>
    <property type="match status" value="1"/>
</dbReference>
<dbReference type="Pfam" id="PF07776">
    <property type="entry name" value="zf-AD"/>
    <property type="match status" value="1"/>
</dbReference>
<dbReference type="Pfam" id="PF00096">
    <property type="entry name" value="zf-C2H2"/>
    <property type="match status" value="4"/>
</dbReference>
<dbReference type="Pfam" id="PF13894">
    <property type="entry name" value="zf-C2H2_4"/>
    <property type="match status" value="1"/>
</dbReference>
<dbReference type="SMART" id="SM00868">
    <property type="entry name" value="zf-AD"/>
    <property type="match status" value="2"/>
</dbReference>
<dbReference type="SMART" id="SM00355">
    <property type="entry name" value="ZnF_C2H2"/>
    <property type="match status" value="7"/>
</dbReference>
<dbReference type="SUPFAM" id="SSF57667">
    <property type="entry name" value="beta-beta-alpha zinc fingers"/>
    <property type="match status" value="4"/>
</dbReference>
<dbReference type="SUPFAM" id="SSF57716">
    <property type="entry name" value="Glucocorticoid receptor-like (DNA-binding domain)"/>
    <property type="match status" value="1"/>
</dbReference>
<dbReference type="PROSITE" id="PS51915">
    <property type="entry name" value="ZAD"/>
    <property type="match status" value="1"/>
</dbReference>
<dbReference type="PROSITE" id="PS00028">
    <property type="entry name" value="ZINC_FINGER_C2H2_1"/>
    <property type="match status" value="6"/>
</dbReference>
<dbReference type="PROSITE" id="PS50157">
    <property type="entry name" value="ZINC_FINGER_C2H2_2"/>
    <property type="match status" value="7"/>
</dbReference>
<sequence length="434" mass="50496">MMHSAKNVCRTCMDETGTLVDIFANVRDPVLDEPEMSLSHILARCTERPVKRGDLLPQFICVSCVLAVQNAFRFKWQSEQSYQHFFRVLNQSGAPENQVHLAACNGDKNQIINQKMQLKSDRQQDTQQMTKTQKPDDDLSQKQTLQAKLQEGNIDGPPESFTLHPRKRTCRTEEQADMIPKEATRSTKMICDADGYYNCPHCSKRFCSQTQLRTHITDLCNRCPYCPRTYMQKSNLKRHLRNHLSKPAHKCFHCSKAFMRKDHLKRHLRTHDSDGPLSCSQCSAVFIEHVQLEIHRREHKQRPGSSKSESTKDPDSDDSDQAQDLKPKWTKNTFNGTCSIPPMLKPKPICDICQKKFSSVYALKRHMLTHNRQHHLKKCTYCSEEFKTEKHLKRHERGHMGDLFRCEFCSLVFVDVNYLRKHKKRIHSNNVIAM</sequence>
<name>KIPF_DROME</name>
<proteinExistence type="evidence at protein level"/>
<gene>
    <name evidence="11" type="primary">kipf</name>
    <name evidence="10" type="synonym">anon-84Eb</name>
    <name type="ORF">CG2678</name>
</gene>
<accession>Q8T053</accession>
<accession>D4G7A6</accession>
<accession>D4G7A7</accession>
<accession>O76205</accession>
<accession>Q9VHY3</accession>
<comment type="function">
    <text evidence="5">DNA-binding zinc finger protein that recruits chromo domain protein rhino/rhi to specific chromatin regions enriched in H3K9me2/3 histone methylation, mediating piRNA (piwi-interacting RNA) biogenesis (PubMed:36193674). May bind to GC rich DNA sequences including a 5'-GRGGN-3' sequence motif (PubMed:36193674). Nucleates rhi/rhino accumulation and stabilizes its expansion (PubMed:36193674). Involved in piRNA transposon repression, particularly in the female ovary during oogenesis (PubMed:36193674).</text>
</comment>
<comment type="subunit">
    <text evidence="5">Homodimer; mediated by the ZAD domain (PubMed:36193674). Interacts (via C2H2 type zinc finger 4) with rhi/rhino (via Chromo domain) (PubMed:36193674). Dimerization is required for association with DNA and interaction with rhi/rhino (PubMed:36193674).</text>
</comment>
<comment type="interaction">
    <interactant intactId="EBI-115627">
        <id>Q8T053</id>
    </interactant>
    <interactant intactId="EBI-149916">
        <id>Q7JXA8</id>
        <label>rhi</label>
    </interactant>
    <organismsDiffer>false</organismsDiffer>
    <experiments>9</experiments>
</comment>
<comment type="subcellular location">
    <subcellularLocation>
        <location evidence="5">Nucleus</location>
    </subcellularLocation>
    <subcellularLocation>
        <location evidence="5">Chromosome</location>
    </subcellularLocation>
    <text evidence="5">Localization along chromosomes matches that of rhi/rhino.</text>
</comment>
<comment type="alternative products">
    <event type="alternative splicing"/>
    <isoform>
        <id>Q8T053-1</id>
        <name evidence="11">A</name>
        <sequence type="displayed"/>
    </isoform>
    <isoform>
        <id>Q8T053-2</id>
        <name evidence="11">B</name>
        <sequence type="described" ref="VSP_061963"/>
    </isoform>
</comment>
<comment type="tissue specificity">
    <text evidence="5">Primarily expressed in ovaries and absent from testes (PubMed:36193674). In ovaries very low levels in germline stem cells and cystoblasts but abundant in developing cysts and polyploid nurse cells (PubMed:36193674).</text>
</comment>
<comment type="domain">
    <text evidence="5">The ZAD domain is required for dimerization.</text>
</comment>
<comment type="domain">
    <text evidence="5">Possesses 2 arrays of C2H2 type zinc fingers (PubMed:36193674). The first, consisting of zinc-fingers 1-4, plays a major role in DNA binding, while the second, consisting of zinc fingers 5-7, only has a minor contribution (PubMed:36193674). C2H2 type zinc finger 4 is required and sufficient for interaction with rhi/rhino but is not required for DNA binding (PubMed:36193674).</text>
</comment>
<comment type="disruption phenotype">
    <text evidence="5">Severe reduction in female fertility (PubMed:36193674). In nurse cells, altered distribution of rhi/rhino, relocalizing to pericentromeric Rsp and 1.688 satellite DNA arrays (PubMed:36193674). This results in increased levels of Rsp and 1.688 satellite piRNAs, reduced levels of transposon-targeting piRNAs and increased stability of transposable element transcripts (PubMed:36193674). Rhi/rhino accumulates near the nuclear envelope in a process dependent on the nxf3 driven piRNA precursor nuclear export pathway (PubMed:36193674). In ovaries, reduced production of piRNA from germline specific rhi/rhino-dependent clusters such as 80F and to a lesser extent 38C and 42AB (PubMed:36193674).</text>
</comment>
<comment type="miscellaneous">
    <text evidence="6">Kipferl is the Austrian name of a traditional breakfast yeasted bread roll common in central and eastern European countries. Its crescent shape is reminiscent of the redistribution pattern of rhino protein in the nuclei of kipf mutant nurse cells.</text>
</comment>
<evidence type="ECO:0000255" key="1">
    <source>
        <dbReference type="PROSITE-ProRule" id="PRU00042"/>
    </source>
</evidence>
<evidence type="ECO:0000255" key="2">
    <source>
        <dbReference type="PROSITE-ProRule" id="PRU01263"/>
    </source>
</evidence>
<evidence type="ECO:0000256" key="3">
    <source>
        <dbReference type="SAM" id="MobiDB-lite"/>
    </source>
</evidence>
<evidence type="ECO:0000269" key="4">
    <source>
    </source>
</evidence>
<evidence type="ECO:0000269" key="5">
    <source>
    </source>
</evidence>
<evidence type="ECO:0000303" key="6">
    <source>
    </source>
</evidence>
<evidence type="ECO:0000305" key="7"/>
<evidence type="ECO:0000312" key="8">
    <source>
        <dbReference type="EMBL" id="ADD70139.1"/>
    </source>
</evidence>
<evidence type="ECO:0000312" key="9">
    <source>
        <dbReference type="EMBL" id="ADD70140.1"/>
    </source>
</evidence>
<evidence type="ECO:0000312" key="10">
    <source>
        <dbReference type="EMBL" id="AFH06292.1"/>
    </source>
</evidence>
<evidence type="ECO:0000312" key="11">
    <source>
        <dbReference type="FlyBase" id="FBgn0014931"/>
    </source>
</evidence>
<organism>
    <name type="scientific">Drosophila melanogaster</name>
    <name type="common">Fruit fly</name>
    <dbReference type="NCBI Taxonomy" id="7227"/>
    <lineage>
        <taxon>Eukaryota</taxon>
        <taxon>Metazoa</taxon>
        <taxon>Ecdysozoa</taxon>
        <taxon>Arthropoda</taxon>
        <taxon>Hexapoda</taxon>
        <taxon>Insecta</taxon>
        <taxon>Pterygota</taxon>
        <taxon>Neoptera</taxon>
        <taxon>Endopterygota</taxon>
        <taxon>Diptera</taxon>
        <taxon>Brachycera</taxon>
        <taxon>Muscomorpha</taxon>
        <taxon>Ephydroidea</taxon>
        <taxon>Drosophilidae</taxon>
        <taxon>Drosophila</taxon>
        <taxon>Sophophora</taxon>
    </lineage>
</organism>
<protein>
    <recommendedName>
        <fullName evidence="7">Zinc finger protein kipf</fullName>
    </recommendedName>
    <alternativeName>
        <fullName evidence="11">Protein kipferl</fullName>
    </alternativeName>
</protein>
<reference key="1">
    <citation type="journal article" date="2000" name="Science">
        <title>The genome sequence of Drosophila melanogaster.</title>
        <authorList>
            <person name="Adams M.D."/>
            <person name="Celniker S.E."/>
            <person name="Holt R.A."/>
            <person name="Evans C.A."/>
            <person name="Gocayne J.D."/>
            <person name="Amanatides P.G."/>
            <person name="Scherer S.E."/>
            <person name="Li P.W."/>
            <person name="Hoskins R.A."/>
            <person name="Galle R.F."/>
            <person name="George R.A."/>
            <person name="Lewis S.E."/>
            <person name="Richards S."/>
            <person name="Ashburner M."/>
            <person name="Henderson S.N."/>
            <person name="Sutton G.G."/>
            <person name="Wortman J.R."/>
            <person name="Yandell M.D."/>
            <person name="Zhang Q."/>
            <person name="Chen L.X."/>
            <person name="Brandon R.C."/>
            <person name="Rogers Y.-H.C."/>
            <person name="Blazej R.G."/>
            <person name="Champe M."/>
            <person name="Pfeiffer B.D."/>
            <person name="Wan K.H."/>
            <person name="Doyle C."/>
            <person name="Baxter E.G."/>
            <person name="Helt G."/>
            <person name="Nelson C.R."/>
            <person name="Miklos G.L.G."/>
            <person name="Abril J.F."/>
            <person name="Agbayani A."/>
            <person name="An H.-J."/>
            <person name="Andrews-Pfannkoch C."/>
            <person name="Baldwin D."/>
            <person name="Ballew R.M."/>
            <person name="Basu A."/>
            <person name="Baxendale J."/>
            <person name="Bayraktaroglu L."/>
            <person name="Beasley E.M."/>
            <person name="Beeson K.Y."/>
            <person name="Benos P.V."/>
            <person name="Berman B.P."/>
            <person name="Bhandari D."/>
            <person name="Bolshakov S."/>
            <person name="Borkova D."/>
            <person name="Botchan M.R."/>
            <person name="Bouck J."/>
            <person name="Brokstein P."/>
            <person name="Brottier P."/>
            <person name="Burtis K.C."/>
            <person name="Busam D.A."/>
            <person name="Butler H."/>
            <person name="Cadieu E."/>
            <person name="Center A."/>
            <person name="Chandra I."/>
            <person name="Cherry J.M."/>
            <person name="Cawley S."/>
            <person name="Dahlke C."/>
            <person name="Davenport L.B."/>
            <person name="Davies P."/>
            <person name="de Pablos B."/>
            <person name="Delcher A."/>
            <person name="Deng Z."/>
            <person name="Mays A.D."/>
            <person name="Dew I."/>
            <person name="Dietz S.M."/>
            <person name="Dodson K."/>
            <person name="Doup L.E."/>
            <person name="Downes M."/>
            <person name="Dugan-Rocha S."/>
            <person name="Dunkov B.C."/>
            <person name="Dunn P."/>
            <person name="Durbin K.J."/>
            <person name="Evangelista C.C."/>
            <person name="Ferraz C."/>
            <person name="Ferriera S."/>
            <person name="Fleischmann W."/>
            <person name="Fosler C."/>
            <person name="Gabrielian A.E."/>
            <person name="Garg N.S."/>
            <person name="Gelbart W.M."/>
            <person name="Glasser K."/>
            <person name="Glodek A."/>
            <person name="Gong F."/>
            <person name="Gorrell J.H."/>
            <person name="Gu Z."/>
            <person name="Guan P."/>
            <person name="Harris M."/>
            <person name="Harris N.L."/>
            <person name="Harvey D.A."/>
            <person name="Heiman T.J."/>
            <person name="Hernandez J.R."/>
            <person name="Houck J."/>
            <person name="Hostin D."/>
            <person name="Houston K.A."/>
            <person name="Howland T.J."/>
            <person name="Wei M.-H."/>
            <person name="Ibegwam C."/>
            <person name="Jalali M."/>
            <person name="Kalush F."/>
            <person name="Karpen G.H."/>
            <person name="Ke Z."/>
            <person name="Kennison J.A."/>
            <person name="Ketchum K.A."/>
            <person name="Kimmel B.E."/>
            <person name="Kodira C.D."/>
            <person name="Kraft C.L."/>
            <person name="Kravitz S."/>
            <person name="Kulp D."/>
            <person name="Lai Z."/>
            <person name="Lasko P."/>
            <person name="Lei Y."/>
            <person name="Levitsky A.A."/>
            <person name="Li J.H."/>
            <person name="Li Z."/>
            <person name="Liang Y."/>
            <person name="Lin X."/>
            <person name="Liu X."/>
            <person name="Mattei B."/>
            <person name="McIntosh T.C."/>
            <person name="McLeod M.P."/>
            <person name="McPherson D."/>
            <person name="Merkulov G."/>
            <person name="Milshina N.V."/>
            <person name="Mobarry C."/>
            <person name="Morris J."/>
            <person name="Moshrefi A."/>
            <person name="Mount S.M."/>
            <person name="Moy M."/>
            <person name="Murphy B."/>
            <person name="Murphy L."/>
            <person name="Muzny D.M."/>
            <person name="Nelson D.L."/>
            <person name="Nelson D.R."/>
            <person name="Nelson K.A."/>
            <person name="Nixon K."/>
            <person name="Nusskern D.R."/>
            <person name="Pacleb J.M."/>
            <person name="Palazzolo M."/>
            <person name="Pittman G.S."/>
            <person name="Pan S."/>
            <person name="Pollard J."/>
            <person name="Puri V."/>
            <person name="Reese M.G."/>
            <person name="Reinert K."/>
            <person name="Remington K."/>
            <person name="Saunders R.D.C."/>
            <person name="Scheeler F."/>
            <person name="Shen H."/>
            <person name="Shue B.C."/>
            <person name="Siden-Kiamos I."/>
            <person name="Simpson M."/>
            <person name="Skupski M.P."/>
            <person name="Smith T.J."/>
            <person name="Spier E."/>
            <person name="Spradling A.C."/>
            <person name="Stapleton M."/>
            <person name="Strong R."/>
            <person name="Sun E."/>
            <person name="Svirskas R."/>
            <person name="Tector C."/>
            <person name="Turner R."/>
            <person name="Venter E."/>
            <person name="Wang A.H."/>
            <person name="Wang X."/>
            <person name="Wang Z.-Y."/>
            <person name="Wassarman D.A."/>
            <person name="Weinstock G.M."/>
            <person name="Weissenbach J."/>
            <person name="Williams S.M."/>
            <person name="Woodage T."/>
            <person name="Worley K.C."/>
            <person name="Wu D."/>
            <person name="Yang S."/>
            <person name="Yao Q.A."/>
            <person name="Ye J."/>
            <person name="Yeh R.-F."/>
            <person name="Zaveri J.S."/>
            <person name="Zhan M."/>
            <person name="Zhang G."/>
            <person name="Zhao Q."/>
            <person name="Zheng L."/>
            <person name="Zheng X.H."/>
            <person name="Zhong F.N."/>
            <person name="Zhong W."/>
            <person name="Zhou X."/>
            <person name="Zhu S.C."/>
            <person name="Zhu X."/>
            <person name="Smith H.O."/>
            <person name="Gibbs R.A."/>
            <person name="Myers E.W."/>
            <person name="Rubin G.M."/>
            <person name="Venter J.C."/>
        </authorList>
    </citation>
    <scope>NUCLEOTIDE SEQUENCE [LARGE SCALE GENOMIC DNA]</scope>
    <source>
        <strain>Berkeley</strain>
    </source>
</reference>
<reference key="2">
    <citation type="journal article" date="2002" name="Genome Biol.">
        <title>Annotation of the Drosophila melanogaster euchromatic genome: a systematic review.</title>
        <authorList>
            <person name="Misra S."/>
            <person name="Crosby M.A."/>
            <person name="Mungall C.J."/>
            <person name="Matthews B.B."/>
            <person name="Campbell K.S."/>
            <person name="Hradecky P."/>
            <person name="Huang Y."/>
            <person name="Kaminker J.S."/>
            <person name="Millburn G.H."/>
            <person name="Prochnik S.E."/>
            <person name="Smith C.D."/>
            <person name="Tupy J.L."/>
            <person name="Whitfield E.J."/>
            <person name="Bayraktaroglu L."/>
            <person name="Berman B.P."/>
            <person name="Bettencourt B.R."/>
            <person name="Celniker S.E."/>
            <person name="de Grey A.D.N.J."/>
            <person name="Drysdale R.A."/>
            <person name="Harris N.L."/>
            <person name="Richter J."/>
            <person name="Russo S."/>
            <person name="Schroeder A.J."/>
            <person name="Shu S.Q."/>
            <person name="Stapleton M."/>
            <person name="Yamada C."/>
            <person name="Ashburner M."/>
            <person name="Gelbart W.M."/>
            <person name="Rubin G.M."/>
            <person name="Lewis S.E."/>
        </authorList>
    </citation>
    <scope>GENOME REANNOTATION</scope>
    <source>
        <strain>Berkeley</strain>
    </source>
</reference>
<reference key="3">
    <citation type="journal article" date="2002" name="Genome Biol.">
        <title>A Drosophila full-length cDNA resource.</title>
        <authorList>
            <person name="Stapleton M."/>
            <person name="Carlson J.W."/>
            <person name="Brokstein P."/>
            <person name="Yu C."/>
            <person name="Champe M."/>
            <person name="George R.A."/>
            <person name="Guarin H."/>
            <person name="Kronmiller B."/>
            <person name="Pacleb J.M."/>
            <person name="Park S."/>
            <person name="Wan K.H."/>
            <person name="Rubin G.M."/>
            <person name="Celniker S.E."/>
        </authorList>
    </citation>
    <scope>NUCLEOTIDE SEQUENCE [LARGE SCALE MRNA] (ISOFORM A)</scope>
    <source>
        <strain>Berkeley</strain>
        <tissue>Embryo</tissue>
    </source>
</reference>
<reference evidence="8 9" key="4">
    <citation type="submission" date="2010-03" db="EMBL/GenBank/DDBJ databases">
        <authorList>
            <person name="Carlson J."/>
            <person name="Booth B."/>
            <person name="Frise E."/>
            <person name="Sandler J."/>
            <person name="Wan K."/>
            <person name="Yu C."/>
            <person name="Celniker S."/>
        </authorList>
    </citation>
    <scope>NUCLEOTIDE SEQUENCE [MRNA] (ISOFORM B)</scope>
</reference>
<reference key="5">
    <citation type="journal article" date="1998" name="Chromosoma">
        <title>Repetitive arrays containing a housekeeping gene promoter have altered polytene chromosome morphology in Drosophila.</title>
        <authorList>
            <person name="Clark D.V."/>
            <person name="Sabl J.F."/>
            <person name="Henikoff S."/>
        </authorList>
    </citation>
    <scope>NUCLEOTIDE SEQUENCE [GENOMIC DNA] OF 1-346</scope>
    <source>
        <strain>Canton-S</strain>
    </source>
</reference>
<reference key="6">
    <citation type="journal article" date="2008" name="J. Proteome Res.">
        <title>Phosphoproteome analysis of Drosophila melanogaster embryos.</title>
        <authorList>
            <person name="Zhai B."/>
            <person name="Villen J."/>
            <person name="Beausoleil S.A."/>
            <person name="Mintseris J."/>
            <person name="Gygi S.P."/>
        </authorList>
    </citation>
    <scope>PHOSPHORYLATION [LARGE SCALE ANALYSIS] AT SER-316 AND SER-319</scope>
    <scope>IDENTIFICATION BY MASS SPECTROMETRY</scope>
    <source>
        <tissue>Embryo</tissue>
    </source>
</reference>
<reference key="7">
    <citation type="journal article" date="2022" name="Elife">
        <title>The Drosophila ZAD zinc finger protein Kipferl guides Rhino to piRNA clusters.</title>
        <authorList>
            <person name="Baumgartner L."/>
            <person name="Handler D."/>
            <person name="Platzer S.W."/>
            <person name="Yu C."/>
            <person name="Duchek P."/>
            <person name="Brennecke J."/>
        </authorList>
    </citation>
    <scope>FUNCTION</scope>
    <scope>SUBUNIT</scope>
    <scope>SUBCELLULAR LOCATION</scope>
    <scope>INTERACTION WITH RHI</scope>
    <scope>TISSUE SPECIFICITY</scope>
    <scope>DOMAIN</scope>
    <scope>DISRUPTION PHENOTYPE</scope>
</reference>
<keyword id="KW-0025">Alternative splicing</keyword>
<keyword id="KW-0158">Chromosome</keyword>
<keyword id="KW-0238">DNA-binding</keyword>
<keyword id="KW-0479">Metal-binding</keyword>
<keyword id="KW-0539">Nucleus</keyword>
<keyword id="KW-0597">Phosphoprotein</keyword>
<keyword id="KW-1185">Reference proteome</keyword>
<keyword id="KW-0677">Repeat</keyword>
<keyword id="KW-0678">Repressor</keyword>
<keyword id="KW-0804">Transcription</keyword>
<keyword id="KW-0805">Transcription regulation</keyword>
<keyword id="KW-0862">Zinc</keyword>
<keyword id="KW-0863">Zinc-finger</keyword>
<feature type="chain" id="PRO_0000047780" description="Zinc finger protein kipf">
    <location>
        <begin position="1"/>
        <end position="434"/>
    </location>
</feature>
<feature type="domain" description="ZAD" evidence="2">
    <location>
        <begin position="7"/>
        <end position="88"/>
    </location>
</feature>
<feature type="zinc finger region" description="C2H2-type 1; degenerate" evidence="1">
    <location>
        <begin position="197"/>
        <end position="219"/>
    </location>
</feature>
<feature type="zinc finger region" description="C2H2-type 2" evidence="1">
    <location>
        <begin position="221"/>
        <end position="243"/>
    </location>
</feature>
<feature type="zinc finger region" description="C2H2-type 3" evidence="1">
    <location>
        <begin position="249"/>
        <end position="271"/>
    </location>
</feature>
<feature type="zinc finger region" description="C2H2-type 4" evidence="1">
    <location>
        <begin position="277"/>
        <end position="299"/>
    </location>
</feature>
<feature type="zinc finger region" description="C2H2-type 5" evidence="1">
    <location>
        <begin position="348"/>
        <end position="370"/>
    </location>
</feature>
<feature type="zinc finger region" description="C2H2-type 6" evidence="1">
    <location>
        <begin position="377"/>
        <end position="399"/>
    </location>
</feature>
<feature type="zinc finger region" description="C2H2-type 7" evidence="1">
    <location>
        <begin position="404"/>
        <end position="427"/>
    </location>
</feature>
<feature type="region of interest" description="Disordered" evidence="3">
    <location>
        <begin position="117"/>
        <end position="173"/>
    </location>
</feature>
<feature type="region of interest" description="Disordered" evidence="3">
    <location>
        <begin position="295"/>
        <end position="328"/>
    </location>
</feature>
<feature type="binding site" evidence="2">
    <location>
        <position position="9"/>
    </location>
    <ligand>
        <name>Zn(2+)</name>
        <dbReference type="ChEBI" id="CHEBI:29105"/>
    </ligand>
</feature>
<feature type="binding site" evidence="2">
    <location>
        <position position="12"/>
    </location>
    <ligand>
        <name>Zn(2+)</name>
        <dbReference type="ChEBI" id="CHEBI:29105"/>
    </ligand>
</feature>
<feature type="binding site" evidence="2">
    <location>
        <position position="61"/>
    </location>
    <ligand>
        <name>Zn(2+)</name>
        <dbReference type="ChEBI" id="CHEBI:29105"/>
    </ligand>
</feature>
<feature type="binding site" evidence="2">
    <location>
        <position position="64"/>
    </location>
    <ligand>
        <name>Zn(2+)</name>
        <dbReference type="ChEBI" id="CHEBI:29105"/>
    </ligand>
</feature>
<feature type="modified residue" description="Phosphoserine" evidence="4">
    <location>
        <position position="316"/>
    </location>
</feature>
<feature type="modified residue" description="Phosphoserine" evidence="4">
    <location>
        <position position="319"/>
    </location>
</feature>
<feature type="splice variant" id="VSP_061963" description="In isoform B." evidence="7">
    <location>
        <begin position="347"/>
        <end position="434"/>
    </location>
</feature>
<feature type="sequence conflict" description="In Ref. 5; AAC39085." evidence="7" ref="5">
    <original>P</original>
    <variation>PE</variation>
    <location>
        <position position="135"/>
    </location>
</feature>